<sequence>MFFFGDASTRPQIKFLCLFIYFIYMEEIFEKSQLENEQPTSKEPEPALKPVDVMSIKNAAQYVNQKLSAKGYFSNKPNKLRQLLLLSLDSSQLIPENAENFEISEKVYENDRNVMNIIYSLLNSAEISKQFKETALKKMADKDAEIELLKNEVEKLNKKVDEKERNIQSLQLDKIKSDLQAKHYQAMLNNVNAKNKEQERTFRLYAEEVKRELRRNEMEVDRLESRLSNMNKRRASPRDDAEAEPKRQKFDNDRFLSLVKENSHLQHDLNKLVGVLLRLQKFLKSFGQLNSNSKVPSTFIPTDSELLAIDHHNFDLQKYDLILFDLLKPLNGDSIDDTFKFKKNNQTDKDQEIASLRNRLSEMEQNYERVLATMEQWKTYRKQK</sequence>
<gene>
    <name type="primary">ATG25</name>
    <name type="synonym">PDD4</name>
</gene>
<keyword id="KW-0072">Autophagy</keyword>
<keyword id="KW-0175">Coiled coil</keyword>
<keyword id="KW-0472">Membrane</keyword>
<keyword id="KW-0653">Protein transport</keyword>
<keyword id="KW-0813">Transport</keyword>
<proteinExistence type="inferred from homology"/>
<evidence type="ECO:0000255" key="1"/>
<evidence type="ECO:0000256" key="2">
    <source>
        <dbReference type="SAM" id="MobiDB-lite"/>
    </source>
</evidence>
<evidence type="ECO:0000269" key="3">
    <source>
    </source>
</evidence>
<evidence type="ECO:0000269" key="4">
    <source>
    </source>
</evidence>
<evidence type="ECO:0000305" key="5"/>
<accession>Q6JUT9</accession>
<organism>
    <name type="scientific">Pichia angusta</name>
    <name type="common">Yeast</name>
    <name type="synonym">Hansenula polymorpha</name>
    <dbReference type="NCBI Taxonomy" id="870730"/>
    <lineage>
        <taxon>Eukaryota</taxon>
        <taxon>Fungi</taxon>
        <taxon>Dikarya</taxon>
        <taxon>Ascomycota</taxon>
        <taxon>Saccharomycotina</taxon>
        <taxon>Pichiomycetes</taxon>
        <taxon>Pichiales</taxon>
        <taxon>Pichiaceae</taxon>
        <taxon>Ogataea</taxon>
    </lineage>
</organism>
<name>ATG25_PICAN</name>
<protein>
    <recommendedName>
        <fullName>Autophagy-related protein 25</fullName>
    </recommendedName>
    <alternativeName>
        <fullName>Peroxisome degradation deficient protein 4</fullName>
    </alternativeName>
</protein>
<comment type="function">
    <text evidence="3 4">Specifically required for selective degradation of peroxisomes via macropexophagy.</text>
</comment>
<comment type="subcellular location">
    <subcellularLocation>
        <location evidence="4">Preautophagosomal structure membrane</location>
        <topology evidence="4">Peripheral membrane protein</topology>
        <orientation evidence="4">Cytoplasmic side</orientation>
    </subcellularLocation>
</comment>
<comment type="similarity">
    <text evidence="5">Belongs to the ADIP family.</text>
</comment>
<feature type="chain" id="PRO_0000064728" description="Autophagy-related protein 25">
    <location>
        <begin position="1"/>
        <end position="384"/>
    </location>
</feature>
<feature type="region of interest" description="Disordered" evidence="2">
    <location>
        <begin position="224"/>
        <end position="247"/>
    </location>
</feature>
<feature type="coiled-coil region" evidence="1">
    <location>
        <begin position="132"/>
        <end position="236"/>
    </location>
</feature>
<feature type="coiled-coil region" evidence="1">
    <location>
        <begin position="342"/>
        <end position="379"/>
    </location>
</feature>
<feature type="compositionally biased region" description="Basic and acidic residues" evidence="2">
    <location>
        <begin position="236"/>
        <end position="247"/>
    </location>
</feature>
<dbReference type="EMBL" id="AY304543">
    <property type="protein sequence ID" value="AAQ74772.1"/>
    <property type="molecule type" value="Genomic_DNA"/>
</dbReference>
<dbReference type="SMR" id="Q6JUT9"/>
<dbReference type="PhylomeDB" id="Q6JUT9"/>
<dbReference type="GO" id="GO:0034045">
    <property type="term" value="C:phagophore assembly site membrane"/>
    <property type="evidence" value="ECO:0007669"/>
    <property type="project" value="UniProtKB-SubCell"/>
</dbReference>
<dbReference type="GO" id="GO:0006914">
    <property type="term" value="P:autophagy"/>
    <property type="evidence" value="ECO:0007669"/>
    <property type="project" value="UniProtKB-KW"/>
</dbReference>
<dbReference type="GO" id="GO:0015031">
    <property type="term" value="P:protein transport"/>
    <property type="evidence" value="ECO:0007669"/>
    <property type="project" value="UniProtKB-KW"/>
</dbReference>
<dbReference type="InterPro" id="IPR021622">
    <property type="entry name" value="Afadin/alpha-actinin-bd"/>
</dbReference>
<dbReference type="Pfam" id="PF11559">
    <property type="entry name" value="ADIP"/>
    <property type="match status" value="1"/>
</dbReference>
<reference key="1">
    <citation type="submission" date="2003-05" db="EMBL/GenBank/DDBJ databases">
        <title>The H. polymorpha PDD4 gene product is required for selective peroxisome degradation.</title>
        <authorList>
            <person name="Monastyrska I."/>
            <person name="Kiel J.A.K.W."/>
            <person name="Veenhuis M."/>
        </authorList>
    </citation>
    <scope>NUCLEOTIDE SEQUENCE [GENOMIC DNA]</scope>
    <source>
        <strain>ATCC 34438 / CBS 4732 / DSM 70277 / JCM 3621 / NBRC 1476 / NRRL Y-5445</strain>
    </source>
</reference>
<reference key="2">
    <citation type="journal article" date="2001" name="Mol. Genet. Genomics">
        <title>Tagging Hansenula polymorpha genes by random integration of linear DNA fragments (RALF).</title>
        <authorList>
            <person name="van Dijk R."/>
            <person name="Faber K.N."/>
            <person name="Hammond A.T."/>
            <person name="Glick B.S."/>
            <person name="Veenhuis M."/>
            <person name="Kiel J.A.K.W."/>
        </authorList>
    </citation>
    <scope>FUNCTION</scope>
</reference>
<reference key="3">
    <citation type="journal article" date="2003" name="Dev. Cell">
        <title>A unified nomenclature for yeast autophagy-related genes.</title>
        <authorList>
            <person name="Klionsky D.J."/>
            <person name="Cregg J.M."/>
            <person name="Dunn W.A. Jr."/>
            <person name="Emr S.D."/>
            <person name="Sakai Y."/>
            <person name="Sandoval I.V."/>
            <person name="Sibirny A."/>
            <person name="Subramani S."/>
            <person name="Thumm M."/>
            <person name="Veenhuis M."/>
            <person name="Ohsumi Y."/>
        </authorList>
    </citation>
    <scope>NOMENCLATURE</scope>
</reference>
<reference key="4">
    <citation type="journal article" date="2005" name="Autophagy">
        <title>The Hansenula polymorpha ATG25 gene encodes a novel coiled-coil protein that is required for macropexophagy.</title>
        <authorList>
            <person name="Monastyrska I."/>
            <person name="Kiel J.A."/>
            <person name="Krikken A.M."/>
            <person name="Komduur J.A."/>
            <person name="Veenhuis M."/>
            <person name="van der Klei I.J."/>
        </authorList>
    </citation>
    <scope>FUNCTION</scope>
    <scope>SUBCELLULAR LOCATION</scope>
</reference>